<comment type="function">
    <text evidence="1 9 10 12 13 15">Epithelial ion channel that plays an important role in the regulation of epithelial ion and water transport and fluid homeostasis (PubMed:26823428). Mediates the transport of chloride ions across the cell membrane (PubMed:20231442, PubMed:22265409). Possesses an intrinsic ATPase activity and utilizes ATP to gate its channel; the passive flow of anions through the channel is gated by cycles of ATP binding and hydrolysis by the ATP-binding domains (By similarity). The ion channel is also permeable to HCO(3)(-); selectivity depends on the extracellular chloride concentration. Exerts its function also by modulating the activity of other ion channels and transporters. Contributes to the regulation of the pH and the ion content of the epithelial fluid layer. Modulates the activity of the epithelial sodium channel (ENaC) complex, in part by regulating the cell surface expression of the ENaC complex. May regulate bicarbonate secretion and salvage in epithelial cells by regulating the transporter SLC4A7. Can inhibit the chloride channel activity of ANO1 (By similarity). Plays a role in the chloride and bicarbonate homeostasis during sperm epididymal maturation and capacitation (PubMed:21976599).</text>
</comment>
<comment type="catalytic activity">
    <reaction evidence="1">
        <text>ATP + H2O + closed Cl(-) channel = ADP + phosphate + open Cl(-) channel.</text>
        <dbReference type="EC" id="5.6.1.6"/>
    </reaction>
</comment>
<comment type="catalytic activity">
    <reaction evidence="1">
        <text>chloride(in) = chloride(out)</text>
        <dbReference type="Rhea" id="RHEA:29823"/>
        <dbReference type="ChEBI" id="CHEBI:17996"/>
    </reaction>
</comment>
<comment type="catalytic activity">
    <reaction evidence="1">
        <text>hydrogencarbonate(in) = hydrogencarbonate(out)</text>
        <dbReference type="Rhea" id="RHEA:28695"/>
        <dbReference type="ChEBI" id="CHEBI:17544"/>
    </reaction>
</comment>
<comment type="catalytic activity">
    <reaction evidence="1">
        <text>ATP + H2O = ADP + phosphate + H(+)</text>
        <dbReference type="Rhea" id="RHEA:13065"/>
        <dbReference type="ChEBI" id="CHEBI:15377"/>
        <dbReference type="ChEBI" id="CHEBI:15378"/>
        <dbReference type="ChEBI" id="CHEBI:30616"/>
        <dbReference type="ChEBI" id="CHEBI:43474"/>
        <dbReference type="ChEBI" id="CHEBI:456216"/>
    </reaction>
    <physiologicalReaction direction="left-to-right" evidence="1">
        <dbReference type="Rhea" id="RHEA:13066"/>
    </physiologicalReaction>
</comment>
<comment type="subunit">
    <text evidence="1 2 9 12 14">Monomer; does not require oligomerization for channel activity. May form oligomers in the membrane (By similarity). Interacts with SLC26A3, SLC26A6 and NHERF1 (PubMed:21976599). Interacts with SHANK2 (By similarity). Interacts with MYO6 (By similarity). Interacts (via C-terminus) with GOPC (via PDZ domain); this promotes CFTR internalization and thereby decreases channel activity. Interacts with SLC4A7 through NHERF1. Found in a complex with MYO5B and RAB11A. Interacts with ANO1. Interacts with SLC26A8 (By similarity). Interacts with AHCYL1; the interaction increases CFTR activity (PubMed:19033647, PubMed:23542070). Interacts with CSE1L (By similarity). The core-glycosylated form interacts with GORASP2 (via PDZ GRASP-type 1 domain) in respone to ER stress (By similarity). Interacts with MARCHF2; the interaction leads to CFTR ubiqtuitination and degradation (By similarity). Interacts with ADGRG2 (By similarity).</text>
</comment>
<comment type="interaction">
    <interactant intactId="EBI-6115317">
        <id>P26361</id>
    </interactant>
    <interactant intactId="EBI-1184085">
        <id>P70441</id>
        <label>Nherf1</label>
    </interactant>
    <organismsDiffer>false</organismsDiffer>
    <experiments>3</experiments>
</comment>
<comment type="interaction">
    <interactant intactId="EBI-6115317">
        <id>P26361</id>
    </interactant>
    <interactant intactId="EBI-6895537">
        <id>Q9WVC8</id>
        <label>Slc26a3</label>
    </interactant>
    <organismsDiffer>false</organismsDiffer>
    <experiments>3</experiments>
</comment>
<comment type="interaction">
    <interactant intactId="EBI-6115317">
        <id>P26361</id>
    </interactant>
    <interactant intactId="EBI-6895517">
        <id>Q8CIW6</id>
        <label>Slc26a6</label>
    </interactant>
    <organismsDiffer>false</organismsDiffer>
    <experiments>3</experiments>
</comment>
<comment type="interaction">
    <interactant intactId="EBI-6115317">
        <id>P26361</id>
    </interactant>
    <interactant intactId="EBI-907802">
        <id>P19120</id>
        <label>HSPA8</label>
    </interactant>
    <organismsDiffer>true</organismsDiffer>
    <experiments>5</experiments>
</comment>
<comment type="subcellular location">
    <subcellularLocation>
        <location evidence="10 11">Apical cell membrane</location>
        <topology evidence="1">Multi-pass membrane protein</topology>
    </subcellularLocation>
    <subcellularLocation>
        <location evidence="1">Early endosome membrane</location>
        <topology evidence="1">Multi-pass membrane protein</topology>
    </subcellularLocation>
    <subcellularLocation>
        <location evidence="10 13">Cell membrane</location>
        <topology evidence="1">Multi-pass membrane protein</topology>
    </subcellularLocation>
    <subcellularLocation>
        <location evidence="1">Recycling endosome membrane</location>
        <topology evidence="1">Multi-pass membrane protein</topology>
    </subcellularLocation>
    <subcellularLocation>
        <location evidence="1">Endoplasmic reticulum membrane</location>
        <topology evidence="1">Multi-pass membrane protein</topology>
    </subcellularLocation>
    <subcellularLocation>
        <location evidence="2">Nucleus</location>
    </subcellularLocation>
    <text evidence="1 2 11">The channel is internalized from the cell surface into an endosomal recycling compartment, from where it is recycled to the cell membrane. In the oviduct and bronchus, detected on the apical side of epithelial cells, but not associated with cilia. In Sertoli cells, a processed product is detected in the nucleus. ER stress induces GORASP2-mediated unconventional (ER/Golgi-independent) trafficking of core-glycosylated CFTR to cell membrane (PubMed:21884936).</text>
</comment>
<comment type="alternative products">
    <event type="alternative splicing"/>
    <isoform>
        <id>P26361-1</id>
        <name>1</name>
        <sequence type="displayed"/>
    </isoform>
    <isoform>
        <id>P26361-2</id>
        <name>2</name>
        <sequence type="described" ref="VSP_000062 VSP_000063"/>
    </isoform>
    <isoform>
        <id>P26361-3</id>
        <name>3</name>
        <sequence type="described" ref="VSP_000064 VSP_000065"/>
    </isoform>
</comment>
<comment type="tissue specificity">
    <text evidence="16 18">Expressed in the epididymis (at protein level) (PubMed:30659401). In the initial segment of the epididymis, detected on both the luminal and basolateral sides of the ducts where it is expressed in the duct columnar cells as well as in the interstitial smooth muscle cells (PubMed:30659401). Expressed in sperm in the caput (PubMed:30659401). In the cauda, detected along the luminal border but not continuously and is also expressed on the basolateral surface (PubMed:30659401). Within the caudal lumen, detected on sperm (PubMed:30659401). Isoform 1: Expressed in a variety of epithelial tissues including colon, kidney, lung, small intestine, pancreatic duct and testis (PubMed:7691356). Isoform 2: Expressed only in testis (PubMed:7691356). Isoform 3: Expressed only in testis (PubMed:7691356).</text>
</comment>
<comment type="domain">
    <text evidence="1 7 8">Binds and hydrolyzes ATP via the two cytoplasmic ABC transporter nucleotide-binding domains. The two ATP-binding domains interact with each other, forming a head-to-tail dimer. Normal ATPase activity requires interaction between the two domains (By similarity). The first ABC transporter nucleotide-binding domain has no ATPase activity by itself (PubMed:14685259, PubMed:15619636).</text>
</comment>
<comment type="domain">
    <text evidence="1">The PDZ-binding motif mediates interactions with GOPC and with the SLC4A7, NHERF1/EBP50 complex.</text>
</comment>
<comment type="domain">
    <text evidence="1">The disordered R region mediates channel activation when it is phosphorylated, but not in the absence of phosphorylation.</text>
</comment>
<comment type="PTM">
    <text evidence="1">N-glycosylated.</text>
</comment>
<comment type="PTM">
    <text evidence="1">Phosphorylated; cAMP treatment promotes phosphorylation and activates the channel. Dephosphorylation decreases the ATPase activity (in vitro). Phosphorylation at PKA sites activates the channel. Phosphorylation at PKC sites enhances the response to phosphorylation by PKA. Phosphorylated by AMPK; this inhibits channel activity.</text>
</comment>
<comment type="PTM">
    <text evidence="1">Ubiquitinated, leading to its degradation in the lysosome. Deubiquitination by USP10 in early endosomes enhances its endocytic recycling to the cell membrane. Ubiquitinated by RNF185 during ER stress. Ubiquitinated by MARCHF2 (By similarity).</text>
</comment>
<comment type="disruption phenotype">
    <text evidence="17">Mice are born at the expected Mendelian rate, but about 80% die within two to five days after birth due to peritonitis (PubMed:7685652). Those that survive fail to thrive, appear runted and weigh about half as much as wild-type littermates (PubMed:7685652). Many of the surviving pups die when they start ingesting solid food, due to intestinal blockage caused by excessive mucus accumulation (PubMed:7685652). None survive for more than about 45 days after birth (PubMed:7685652). Intestinal crypts in the jejunum and ileum are filled with excessive mucus (PubMed:7685652). Excessive accumulation of mucus is also seen in colon (PubMed:7685652). In contrast, their lungs do not present pathological mucus accumulation (PubMed:7685652). Likewise, only five out of ten animals show dilatation and blockage of several small pancreatic ducts (PubMed:7685652). Besides, mutant mice present defects in their lacrimal glands that make them more susceptible to develop eye infections (PubMed:7685652). In caecum epithelium, forskolin-sensitive ion transport is nearly abolished (PubMed:7685652).</text>
</comment>
<comment type="similarity">
    <text evidence="19">Belongs to the ABC transporter superfamily. ABCC family. CFTR transporter (TC 3.A.1.202) subfamily.</text>
</comment>
<name>CFTR_MOUSE</name>
<protein>
    <recommendedName>
        <fullName evidence="19">Cystic fibrosis transmembrane conductance regulator</fullName>
        <shortName>CFTR</shortName>
    </recommendedName>
    <alternativeName>
        <fullName>ATP-binding cassette sub-family C member 7</fullName>
    </alternativeName>
    <alternativeName>
        <fullName>Channel conductance-controlling ATPase</fullName>
        <ecNumber evidence="1">5.6.1.6</ecNumber>
    </alternativeName>
    <alternativeName>
        <fullName>cAMP-dependent chloride channel</fullName>
    </alternativeName>
</protein>
<evidence type="ECO:0000250" key="1">
    <source>
        <dbReference type="UniProtKB" id="P13569"/>
    </source>
</evidence>
<evidence type="ECO:0000250" key="2">
    <source>
        <dbReference type="UniProtKB" id="P34158"/>
    </source>
</evidence>
<evidence type="ECO:0000255" key="3"/>
<evidence type="ECO:0000255" key="4">
    <source>
        <dbReference type="PROSITE-ProRule" id="PRU00434"/>
    </source>
</evidence>
<evidence type="ECO:0000255" key="5">
    <source>
        <dbReference type="PROSITE-ProRule" id="PRU00441"/>
    </source>
</evidence>
<evidence type="ECO:0000256" key="6">
    <source>
        <dbReference type="SAM" id="MobiDB-lite"/>
    </source>
</evidence>
<evidence type="ECO:0000269" key="7">
    <source>
    </source>
</evidence>
<evidence type="ECO:0000269" key="8">
    <source>
    </source>
</evidence>
<evidence type="ECO:0000269" key="9">
    <source>
    </source>
</evidence>
<evidence type="ECO:0000269" key="10">
    <source>
    </source>
</evidence>
<evidence type="ECO:0000269" key="11">
    <source>
    </source>
</evidence>
<evidence type="ECO:0000269" key="12">
    <source>
    </source>
</evidence>
<evidence type="ECO:0000269" key="13">
    <source>
    </source>
</evidence>
<evidence type="ECO:0000269" key="14">
    <source>
    </source>
</evidence>
<evidence type="ECO:0000269" key="15">
    <source>
    </source>
</evidence>
<evidence type="ECO:0000269" key="16">
    <source>
    </source>
</evidence>
<evidence type="ECO:0000269" key="17">
    <source>
    </source>
</evidence>
<evidence type="ECO:0000269" key="18">
    <source>
    </source>
</evidence>
<evidence type="ECO:0000305" key="19"/>
<evidence type="ECO:0000312" key="20">
    <source>
        <dbReference type="MGI" id="MGI:88388"/>
    </source>
</evidence>
<evidence type="ECO:0007744" key="21">
    <source>
        <dbReference type="PDB" id="1Q3H"/>
    </source>
</evidence>
<evidence type="ECO:0007744" key="22">
    <source>
        <dbReference type="PDB" id="1R0X"/>
    </source>
</evidence>
<evidence type="ECO:0007744" key="23">
    <source>
        <dbReference type="PDB" id="1R0Z"/>
    </source>
</evidence>
<evidence type="ECO:0007744" key="24">
    <source>
        <dbReference type="PDB" id="1R10"/>
    </source>
</evidence>
<evidence type="ECO:0007744" key="25">
    <source>
        <dbReference type="PDB" id="1XF9"/>
    </source>
</evidence>
<evidence type="ECO:0007744" key="26">
    <source>
        <dbReference type="PDB" id="1XFA"/>
    </source>
</evidence>
<evidence type="ECO:0007744" key="27">
    <source>
        <dbReference type="PDB" id="3SI7"/>
    </source>
</evidence>
<evidence type="ECO:0007744" key="28">
    <source>
    </source>
</evidence>
<evidence type="ECO:0007829" key="29">
    <source>
        <dbReference type="PDB" id="1R0W"/>
    </source>
</evidence>
<evidence type="ECO:0007829" key="30">
    <source>
        <dbReference type="PDB" id="1R0X"/>
    </source>
</evidence>
<evidence type="ECO:0007829" key="31">
    <source>
        <dbReference type="PDB" id="1R0Z"/>
    </source>
</evidence>
<accession>P26361</accession>
<accession>Q63893</accession>
<accession>Q63894</accession>
<accession>Q9JKQ6</accession>
<dbReference type="EC" id="5.6.1.6" evidence="1"/>
<dbReference type="EMBL" id="M69298">
    <property type="protein sequence ID" value="AAA37417.1"/>
    <property type="molecule type" value="mRNA"/>
</dbReference>
<dbReference type="EMBL" id="M60493">
    <property type="protein sequence ID" value="AAA18903.1"/>
    <property type="molecule type" value="mRNA"/>
</dbReference>
<dbReference type="EMBL" id="AF162137">
    <property type="protein sequence ID" value="AAF30300.1"/>
    <property type="molecule type" value="Genomic_DNA"/>
</dbReference>
<dbReference type="EMBL" id="L04873">
    <property type="protein sequence ID" value="AAA73562.1"/>
    <property type="molecule type" value="Genomic_DNA"/>
</dbReference>
<dbReference type="EMBL" id="S65942">
    <property type="protein sequence ID" value="AAB28393.1"/>
    <property type="molecule type" value="Genomic_DNA"/>
</dbReference>
<dbReference type="EMBL" id="S65940">
    <property type="protein sequence ID" value="AAB28393.1"/>
    <property type="status" value="JOINED"/>
    <property type="molecule type" value="Genomic_DNA"/>
</dbReference>
<dbReference type="EMBL" id="S65941">
    <property type="protein sequence ID" value="AAB28393.1"/>
    <property type="status" value="JOINED"/>
    <property type="molecule type" value="Genomic_DNA"/>
</dbReference>
<dbReference type="EMBL" id="S65942">
    <property type="protein sequence ID" value="AAB28391.1"/>
    <property type="molecule type" value="Genomic_DNA"/>
</dbReference>
<dbReference type="EMBL" id="S65941">
    <property type="protein sequence ID" value="AAB28392.1"/>
    <property type="molecule type" value="Genomic_DNA"/>
</dbReference>
<dbReference type="EMBL" id="S65940">
    <property type="protein sequence ID" value="AAB28392.1"/>
    <property type="status" value="JOINED"/>
    <property type="molecule type" value="Genomic_DNA"/>
</dbReference>
<dbReference type="CCDS" id="CCDS19930.1">
    <molecule id="P26361-1"/>
</dbReference>
<dbReference type="PIR" id="A39901">
    <property type="entry name" value="A39901"/>
</dbReference>
<dbReference type="PIR" id="A40303">
    <property type="entry name" value="A40303"/>
</dbReference>
<dbReference type="PIR" id="I49593">
    <property type="entry name" value="I49593"/>
</dbReference>
<dbReference type="PIR" id="I58115">
    <property type="entry name" value="I58115"/>
</dbReference>
<dbReference type="PIR" id="I78527">
    <property type="entry name" value="I78527"/>
</dbReference>
<dbReference type="RefSeq" id="NP_066388.1">
    <molecule id="P26361-1"/>
    <property type="nucleotide sequence ID" value="NM_021050.2"/>
</dbReference>
<dbReference type="RefSeq" id="XP_006505040.1">
    <property type="nucleotide sequence ID" value="XM_006504977.1"/>
</dbReference>
<dbReference type="RefSeq" id="XP_006505041.1">
    <property type="nucleotide sequence ID" value="XM_006504978.1"/>
</dbReference>
<dbReference type="PDB" id="1Q3H">
    <property type="method" value="X-ray"/>
    <property type="resolution" value="2.50 A"/>
    <property type="chains" value="A/B/C/D=389-673"/>
</dbReference>
<dbReference type="PDB" id="1R0W">
    <property type="method" value="X-ray"/>
    <property type="resolution" value="2.20 A"/>
    <property type="chains" value="A/B/C/D=389-673"/>
</dbReference>
<dbReference type="PDB" id="1R0X">
    <property type="method" value="X-ray"/>
    <property type="resolution" value="2.20 A"/>
    <property type="chains" value="A/B/C/D=389-673"/>
</dbReference>
<dbReference type="PDB" id="1R0Y">
    <property type="method" value="X-ray"/>
    <property type="resolution" value="2.55 A"/>
    <property type="chains" value="A/B/C/D=389-673"/>
</dbReference>
<dbReference type="PDB" id="1R0Z">
    <property type="method" value="X-ray"/>
    <property type="resolution" value="2.35 A"/>
    <property type="chains" value="A/B/C/D=389-673"/>
</dbReference>
<dbReference type="PDB" id="1R10">
    <property type="method" value="X-ray"/>
    <property type="resolution" value="3.00 A"/>
    <property type="chains" value="A/B=389-673"/>
</dbReference>
<dbReference type="PDB" id="1XF9">
    <property type="method" value="X-ray"/>
    <property type="resolution" value="2.70 A"/>
    <property type="chains" value="A/B/C/D=389-670"/>
</dbReference>
<dbReference type="PDB" id="1XFA">
    <property type="method" value="X-ray"/>
    <property type="resolution" value="3.10 A"/>
    <property type="chains" value="A/B=389-670"/>
</dbReference>
<dbReference type="PDB" id="3SI7">
    <property type="method" value="X-ray"/>
    <property type="resolution" value="2.25 A"/>
    <property type="chains" value="A/B/C/D=389-673"/>
</dbReference>
<dbReference type="PDBsum" id="1Q3H"/>
<dbReference type="PDBsum" id="1R0W"/>
<dbReference type="PDBsum" id="1R0X"/>
<dbReference type="PDBsum" id="1R0Y"/>
<dbReference type="PDBsum" id="1R0Z"/>
<dbReference type="PDBsum" id="1R10"/>
<dbReference type="PDBsum" id="1XF9"/>
<dbReference type="PDBsum" id="1XFA"/>
<dbReference type="PDBsum" id="3SI7"/>
<dbReference type="SMR" id="P26361"/>
<dbReference type="BioGRID" id="198687">
    <property type="interactions" value="12"/>
</dbReference>
<dbReference type="CORUM" id="P26361"/>
<dbReference type="DIP" id="DIP-29618N"/>
<dbReference type="FunCoup" id="P26361">
    <property type="interactions" value="387"/>
</dbReference>
<dbReference type="IntAct" id="P26361">
    <property type="interactions" value="11"/>
</dbReference>
<dbReference type="MINT" id="P26361"/>
<dbReference type="STRING" id="10090.ENSMUSP00000049228"/>
<dbReference type="GlyCosmos" id="P26361">
    <property type="glycosylation" value="2 sites, No reported glycans"/>
</dbReference>
<dbReference type="GlyGen" id="P26361">
    <property type="glycosylation" value="2 sites"/>
</dbReference>
<dbReference type="iPTMnet" id="P26361"/>
<dbReference type="PhosphoSitePlus" id="P26361"/>
<dbReference type="PaxDb" id="10090-ENSMUSP00000049228"/>
<dbReference type="PeptideAtlas" id="P26361"/>
<dbReference type="ProteomicsDB" id="281397">
    <molecule id="P26361-1"/>
</dbReference>
<dbReference type="ProteomicsDB" id="281398">
    <molecule id="P26361-2"/>
</dbReference>
<dbReference type="ProteomicsDB" id="281399">
    <molecule id="P26361-3"/>
</dbReference>
<dbReference type="Antibodypedia" id="4530">
    <property type="antibodies" value="1170 antibodies from 41 providers"/>
</dbReference>
<dbReference type="DNASU" id="12638"/>
<dbReference type="Ensembl" id="ENSMUST00000045706.12">
    <molecule id="P26361-1"/>
    <property type="protein sequence ID" value="ENSMUSP00000049228.6"/>
    <property type="gene ID" value="ENSMUSG00000041301.16"/>
</dbReference>
<dbReference type="Ensembl" id="ENSMUST00000115405.9">
    <molecule id="P26361-3"/>
    <property type="protein sequence ID" value="ENSMUSP00000111064.3"/>
    <property type="gene ID" value="ENSMUSG00000041301.16"/>
</dbReference>
<dbReference type="Ensembl" id="ENSMUST00000140407.8">
    <molecule id="P26361-2"/>
    <property type="protein sequence ID" value="ENSMUSP00000116957.2"/>
    <property type="gene ID" value="ENSMUSG00000041301.16"/>
</dbReference>
<dbReference type="GeneID" id="12638"/>
<dbReference type="KEGG" id="mmu:12638"/>
<dbReference type="UCSC" id="uc009bai.1">
    <molecule id="P26361-1"/>
    <property type="organism name" value="mouse"/>
</dbReference>
<dbReference type="AGR" id="MGI:88388"/>
<dbReference type="CTD" id="1080"/>
<dbReference type="MGI" id="MGI:88388">
    <property type="gene designation" value="Cftr"/>
</dbReference>
<dbReference type="VEuPathDB" id="HostDB:ENSMUSG00000041301"/>
<dbReference type="eggNOG" id="KOG0054">
    <property type="taxonomic scope" value="Eukaryota"/>
</dbReference>
<dbReference type="GeneTree" id="ENSGT00940000158567"/>
<dbReference type="HOGENOM" id="CLU_000604_27_14_1"/>
<dbReference type="InParanoid" id="P26361"/>
<dbReference type="OMA" id="CQRYLVI"/>
<dbReference type="OrthoDB" id="6500128at2759"/>
<dbReference type="PhylomeDB" id="P26361"/>
<dbReference type="TreeFam" id="TF105200"/>
<dbReference type="BRENDA" id="2.7.4.3">
    <property type="organism ID" value="3474"/>
</dbReference>
<dbReference type="BRENDA" id="5.6.1.6">
    <property type="organism ID" value="3474"/>
</dbReference>
<dbReference type="Reactome" id="R-MMU-382556">
    <property type="pathway name" value="ABC-family proteins mediated transport"/>
</dbReference>
<dbReference type="Reactome" id="R-MMU-5627083">
    <property type="pathway name" value="RHO GTPases regulate CFTR trafficking"/>
</dbReference>
<dbReference type="Reactome" id="R-MMU-5689880">
    <property type="pathway name" value="Ub-specific processing proteases"/>
</dbReference>
<dbReference type="Reactome" id="R-MMU-8856825">
    <property type="pathway name" value="Cargo recognition for clathrin-mediated endocytosis"/>
</dbReference>
<dbReference type="Reactome" id="R-MMU-8856828">
    <property type="pathway name" value="Clathrin-mediated endocytosis"/>
</dbReference>
<dbReference type="Reactome" id="R-MMU-9013406">
    <property type="pathway name" value="RHOQ GTPase cycle"/>
</dbReference>
<dbReference type="Reactome" id="R-MMU-9646399">
    <property type="pathway name" value="Aggrephagy"/>
</dbReference>
<dbReference type="BioGRID-ORCS" id="12638">
    <property type="hits" value="4 hits in 77 CRISPR screens"/>
</dbReference>
<dbReference type="ChiTaRS" id="Cftr">
    <property type="organism name" value="mouse"/>
</dbReference>
<dbReference type="EvolutionaryTrace" id="P26361"/>
<dbReference type="PRO" id="PR:P26361"/>
<dbReference type="Proteomes" id="UP000000589">
    <property type="component" value="Chromosome 6"/>
</dbReference>
<dbReference type="RNAct" id="P26361">
    <property type="molecule type" value="protein"/>
</dbReference>
<dbReference type="Bgee" id="ENSMUSG00000041301">
    <property type="expression patterns" value="Expressed in paneth cell and 107 other cell types or tissues"/>
</dbReference>
<dbReference type="ExpressionAtlas" id="P26361">
    <property type="expression patterns" value="baseline and differential"/>
</dbReference>
<dbReference type="GO" id="GO:0016324">
    <property type="term" value="C:apical plasma membrane"/>
    <property type="evidence" value="ECO:0000314"/>
    <property type="project" value="UniProtKB"/>
</dbReference>
<dbReference type="GO" id="GO:0009986">
    <property type="term" value="C:cell surface"/>
    <property type="evidence" value="ECO:0007669"/>
    <property type="project" value="Ensembl"/>
</dbReference>
<dbReference type="GO" id="GO:0034707">
    <property type="term" value="C:chloride channel complex"/>
    <property type="evidence" value="ECO:0007669"/>
    <property type="project" value="UniProtKB-KW"/>
</dbReference>
<dbReference type="GO" id="GO:0005829">
    <property type="term" value="C:cytosol"/>
    <property type="evidence" value="ECO:0000314"/>
    <property type="project" value="UniProtKB"/>
</dbReference>
<dbReference type="GO" id="GO:0005769">
    <property type="term" value="C:early endosome"/>
    <property type="evidence" value="ECO:0000250"/>
    <property type="project" value="UniProtKB"/>
</dbReference>
<dbReference type="GO" id="GO:0031901">
    <property type="term" value="C:early endosome membrane"/>
    <property type="evidence" value="ECO:0007669"/>
    <property type="project" value="UniProtKB-SubCell"/>
</dbReference>
<dbReference type="GO" id="GO:0005789">
    <property type="term" value="C:endoplasmic reticulum membrane"/>
    <property type="evidence" value="ECO:0000250"/>
    <property type="project" value="UniProtKB"/>
</dbReference>
<dbReference type="GO" id="GO:0016020">
    <property type="term" value="C:membrane"/>
    <property type="evidence" value="ECO:0000250"/>
    <property type="project" value="UniProtKB"/>
</dbReference>
<dbReference type="GO" id="GO:0005634">
    <property type="term" value="C:nucleus"/>
    <property type="evidence" value="ECO:0000250"/>
    <property type="project" value="UniProtKB"/>
</dbReference>
<dbReference type="GO" id="GO:0005886">
    <property type="term" value="C:plasma membrane"/>
    <property type="evidence" value="ECO:0000314"/>
    <property type="project" value="UniProtKB"/>
</dbReference>
<dbReference type="GO" id="GO:0055038">
    <property type="term" value="C:recycling endosome membrane"/>
    <property type="evidence" value="ECO:0007669"/>
    <property type="project" value="UniProtKB-SubCell"/>
</dbReference>
<dbReference type="GO" id="GO:0071889">
    <property type="term" value="F:14-3-3 protein binding"/>
    <property type="evidence" value="ECO:0007669"/>
    <property type="project" value="Ensembl"/>
</dbReference>
<dbReference type="GO" id="GO:0140359">
    <property type="term" value="F:ABC-type transporter activity"/>
    <property type="evidence" value="ECO:0007669"/>
    <property type="project" value="InterPro"/>
</dbReference>
<dbReference type="GO" id="GO:0005524">
    <property type="term" value="F:ATP binding"/>
    <property type="evidence" value="ECO:0007669"/>
    <property type="project" value="UniProtKB-KW"/>
</dbReference>
<dbReference type="GO" id="GO:0016887">
    <property type="term" value="F:ATP hydrolysis activity"/>
    <property type="evidence" value="ECO:0000250"/>
    <property type="project" value="UniProtKB"/>
</dbReference>
<dbReference type="GO" id="GO:0015106">
    <property type="term" value="F:bicarbonate transmembrane transporter activity"/>
    <property type="evidence" value="ECO:0000315"/>
    <property type="project" value="UniProtKB"/>
</dbReference>
<dbReference type="GO" id="GO:0005254">
    <property type="term" value="F:chloride channel activity"/>
    <property type="evidence" value="ECO:0000314"/>
    <property type="project" value="UniProtKB"/>
</dbReference>
<dbReference type="GO" id="GO:0019869">
    <property type="term" value="F:chloride channel inhibitor activity"/>
    <property type="evidence" value="ECO:0000250"/>
    <property type="project" value="UniProtKB"/>
</dbReference>
<dbReference type="GO" id="GO:0015108">
    <property type="term" value="F:chloride transmembrane transporter activity"/>
    <property type="evidence" value="ECO:0000315"/>
    <property type="project" value="UniProtKB"/>
</dbReference>
<dbReference type="GO" id="GO:0019899">
    <property type="term" value="F:enzyme binding"/>
    <property type="evidence" value="ECO:0007669"/>
    <property type="project" value="Ensembl"/>
</dbReference>
<dbReference type="GO" id="GO:0005260">
    <property type="term" value="F:intracellularly ATP-gated chloride channel activity"/>
    <property type="evidence" value="ECO:0000250"/>
    <property type="project" value="UniProtKB"/>
</dbReference>
<dbReference type="GO" id="GO:0030165">
    <property type="term" value="F:PDZ domain binding"/>
    <property type="evidence" value="ECO:0007669"/>
    <property type="project" value="Ensembl"/>
</dbReference>
<dbReference type="GO" id="GO:0051087">
    <property type="term" value="F:protein-folding chaperone binding"/>
    <property type="evidence" value="ECO:0007669"/>
    <property type="project" value="Ensembl"/>
</dbReference>
<dbReference type="GO" id="GO:0106138">
    <property type="term" value="F:Sec61 translocon complex binding"/>
    <property type="evidence" value="ECO:0007669"/>
    <property type="project" value="Ensembl"/>
</dbReference>
<dbReference type="GO" id="GO:0097186">
    <property type="term" value="P:amelogenesis"/>
    <property type="evidence" value="ECO:0000314"/>
    <property type="project" value="ARUK-UCL"/>
</dbReference>
<dbReference type="GO" id="GO:0015701">
    <property type="term" value="P:bicarbonate transport"/>
    <property type="evidence" value="ECO:0000250"/>
    <property type="project" value="UniProtKB"/>
</dbReference>
<dbReference type="GO" id="GO:0071320">
    <property type="term" value="P:cellular response to cAMP"/>
    <property type="evidence" value="ECO:0000314"/>
    <property type="project" value="UniProtKB"/>
</dbReference>
<dbReference type="GO" id="GO:1904322">
    <property type="term" value="P:cellular response to forskolin"/>
    <property type="evidence" value="ECO:0000250"/>
    <property type="project" value="UniProtKB"/>
</dbReference>
<dbReference type="GO" id="GO:1902476">
    <property type="term" value="P:chloride transmembrane transport"/>
    <property type="evidence" value="ECO:0000314"/>
    <property type="project" value="UniProtKB"/>
</dbReference>
<dbReference type="GO" id="GO:0006821">
    <property type="term" value="P:chloride transport"/>
    <property type="evidence" value="ECO:0000316"/>
    <property type="project" value="MGI"/>
</dbReference>
<dbReference type="GO" id="GO:0006695">
    <property type="term" value="P:cholesterol biosynthetic process"/>
    <property type="evidence" value="ECO:0000315"/>
    <property type="project" value="MGI"/>
</dbReference>
<dbReference type="GO" id="GO:0030301">
    <property type="term" value="P:cholesterol transport"/>
    <property type="evidence" value="ECO:0000315"/>
    <property type="project" value="MGI"/>
</dbReference>
<dbReference type="GO" id="GO:0051649">
    <property type="term" value="P:establishment of localization in cell"/>
    <property type="evidence" value="ECO:0000316"/>
    <property type="project" value="MGI"/>
</dbReference>
<dbReference type="GO" id="GO:0051454">
    <property type="term" value="P:intracellular pH elevation"/>
    <property type="evidence" value="ECO:0000315"/>
    <property type="project" value="UniProtKB"/>
</dbReference>
<dbReference type="GO" id="GO:0060081">
    <property type="term" value="P:membrane hyperpolarization"/>
    <property type="evidence" value="ECO:0000315"/>
    <property type="project" value="UniProtKB"/>
</dbReference>
<dbReference type="GO" id="GO:0050891">
    <property type="term" value="P:multicellular organismal-level water homeostasis"/>
    <property type="evidence" value="ECO:0000250"/>
    <property type="project" value="UniProtKB"/>
</dbReference>
<dbReference type="GO" id="GO:1902161">
    <property type="term" value="P:positive regulation of cyclic nucleotide-gated ion channel activity"/>
    <property type="evidence" value="ECO:0000315"/>
    <property type="project" value="UniProtKB"/>
</dbReference>
<dbReference type="GO" id="GO:0070175">
    <property type="term" value="P:positive regulation of enamel mineralization"/>
    <property type="evidence" value="ECO:0000314"/>
    <property type="project" value="ARUK-UCL"/>
</dbReference>
<dbReference type="GO" id="GO:0045921">
    <property type="term" value="P:positive regulation of exocytosis"/>
    <property type="evidence" value="ECO:0000315"/>
    <property type="project" value="UniProtKB"/>
</dbReference>
<dbReference type="GO" id="GO:0035774">
    <property type="term" value="P:positive regulation of insulin secretion involved in cellular response to glucose stimulus"/>
    <property type="evidence" value="ECO:0000315"/>
    <property type="project" value="UniProtKB"/>
</dbReference>
<dbReference type="GO" id="GO:0034976">
    <property type="term" value="P:response to endoplasmic reticulum stress"/>
    <property type="evidence" value="ECO:0000250"/>
    <property type="project" value="UniProtKB"/>
</dbReference>
<dbReference type="GO" id="GO:0048240">
    <property type="term" value="P:sperm capacitation"/>
    <property type="evidence" value="ECO:0000315"/>
    <property type="project" value="UniProtKB"/>
</dbReference>
<dbReference type="GO" id="GO:0035377">
    <property type="term" value="P:transepithelial water transport"/>
    <property type="evidence" value="ECO:0000250"/>
    <property type="project" value="UniProtKB"/>
</dbReference>
<dbReference type="GO" id="GO:0006904">
    <property type="term" value="P:vesicle docking involved in exocytosis"/>
    <property type="evidence" value="ECO:0000315"/>
    <property type="project" value="UniProtKB"/>
</dbReference>
<dbReference type="CDD" id="cd03291">
    <property type="entry name" value="ABCC_CFTR1"/>
    <property type="match status" value="1"/>
</dbReference>
<dbReference type="CDD" id="cd03289">
    <property type="entry name" value="ABCC_CFTR2"/>
    <property type="match status" value="1"/>
</dbReference>
<dbReference type="FunFam" id="1.20.1560.10:FF:000017">
    <property type="entry name" value="Cystic fibrosis transmembrane conductance regulator"/>
    <property type="match status" value="1"/>
</dbReference>
<dbReference type="FunFam" id="1.20.1560.10:FF:000019">
    <property type="entry name" value="Cystic fibrosis transmembrane conductance regulator"/>
    <property type="match status" value="1"/>
</dbReference>
<dbReference type="FunFam" id="3.40.50.300:FF:000581">
    <property type="entry name" value="Cystic fibrosis transmembrane conductance regulator"/>
    <property type="match status" value="1"/>
</dbReference>
<dbReference type="FunFam" id="3.40.50.300:FF:000591">
    <property type="entry name" value="Cystic fibrosis transmembrane conductance regulator"/>
    <property type="match status" value="1"/>
</dbReference>
<dbReference type="Gene3D" id="1.20.1560.10">
    <property type="entry name" value="ABC transporter type 1, transmembrane domain"/>
    <property type="match status" value="2"/>
</dbReference>
<dbReference type="Gene3D" id="3.40.50.300">
    <property type="entry name" value="P-loop containing nucleotide triphosphate hydrolases"/>
    <property type="match status" value="2"/>
</dbReference>
<dbReference type="InterPro" id="IPR003593">
    <property type="entry name" value="AAA+_ATPase"/>
</dbReference>
<dbReference type="InterPro" id="IPR011527">
    <property type="entry name" value="ABC1_TM_dom"/>
</dbReference>
<dbReference type="InterPro" id="IPR036640">
    <property type="entry name" value="ABC1_TM_sf"/>
</dbReference>
<dbReference type="InterPro" id="IPR003439">
    <property type="entry name" value="ABC_transporter-like_ATP-bd"/>
</dbReference>
<dbReference type="InterPro" id="IPR017871">
    <property type="entry name" value="ABC_transporter-like_CS"/>
</dbReference>
<dbReference type="InterPro" id="IPR050173">
    <property type="entry name" value="ABC_transporter_C-like"/>
</dbReference>
<dbReference type="InterPro" id="IPR009147">
    <property type="entry name" value="CFTR/ABCC7"/>
</dbReference>
<dbReference type="InterPro" id="IPR047082">
    <property type="entry name" value="CFTR1_ATP-bd_dom1"/>
</dbReference>
<dbReference type="InterPro" id="IPR025837">
    <property type="entry name" value="CFTR_reg_dom"/>
</dbReference>
<dbReference type="InterPro" id="IPR027417">
    <property type="entry name" value="P-loop_NTPase"/>
</dbReference>
<dbReference type="NCBIfam" id="TIGR01271">
    <property type="entry name" value="CFTR_protein"/>
    <property type="match status" value="1"/>
</dbReference>
<dbReference type="PANTHER" id="PTHR24223">
    <property type="entry name" value="ATP-BINDING CASSETTE SUB-FAMILY C"/>
    <property type="match status" value="1"/>
</dbReference>
<dbReference type="PANTHER" id="PTHR24223:SF19">
    <property type="entry name" value="CYSTIC FIBROSIS TRANSMEMBRANE CONDUCTANCE REGULATOR"/>
    <property type="match status" value="1"/>
</dbReference>
<dbReference type="Pfam" id="PF00664">
    <property type="entry name" value="ABC_membrane"/>
    <property type="match status" value="2"/>
</dbReference>
<dbReference type="Pfam" id="PF00005">
    <property type="entry name" value="ABC_tran"/>
    <property type="match status" value="2"/>
</dbReference>
<dbReference type="Pfam" id="PF14396">
    <property type="entry name" value="CFTR_R"/>
    <property type="match status" value="1"/>
</dbReference>
<dbReference type="PRINTS" id="PR01851">
    <property type="entry name" value="CYSFIBREGLTR"/>
</dbReference>
<dbReference type="SMART" id="SM00382">
    <property type="entry name" value="AAA"/>
    <property type="match status" value="2"/>
</dbReference>
<dbReference type="SUPFAM" id="SSF90123">
    <property type="entry name" value="ABC transporter transmembrane region"/>
    <property type="match status" value="2"/>
</dbReference>
<dbReference type="SUPFAM" id="SSF52540">
    <property type="entry name" value="P-loop containing nucleoside triphosphate hydrolases"/>
    <property type="match status" value="2"/>
</dbReference>
<dbReference type="PROSITE" id="PS50929">
    <property type="entry name" value="ABC_TM1F"/>
    <property type="match status" value="2"/>
</dbReference>
<dbReference type="PROSITE" id="PS00211">
    <property type="entry name" value="ABC_TRANSPORTER_1"/>
    <property type="match status" value="1"/>
</dbReference>
<dbReference type="PROSITE" id="PS50893">
    <property type="entry name" value="ABC_TRANSPORTER_2"/>
    <property type="match status" value="2"/>
</dbReference>
<organism>
    <name type="scientific">Mus musculus</name>
    <name type="common">Mouse</name>
    <dbReference type="NCBI Taxonomy" id="10090"/>
    <lineage>
        <taxon>Eukaryota</taxon>
        <taxon>Metazoa</taxon>
        <taxon>Chordata</taxon>
        <taxon>Craniata</taxon>
        <taxon>Vertebrata</taxon>
        <taxon>Euteleostomi</taxon>
        <taxon>Mammalia</taxon>
        <taxon>Eutheria</taxon>
        <taxon>Euarchontoglires</taxon>
        <taxon>Glires</taxon>
        <taxon>Rodentia</taxon>
        <taxon>Myomorpha</taxon>
        <taxon>Muroidea</taxon>
        <taxon>Muridae</taxon>
        <taxon>Murinae</taxon>
        <taxon>Mus</taxon>
        <taxon>Mus</taxon>
    </lineage>
</organism>
<feature type="chain" id="PRO_0000093424" description="Cystic fibrosis transmembrane conductance regulator">
    <location>
        <begin position="1"/>
        <end position="1476"/>
    </location>
</feature>
<feature type="topological domain" description="Cytoplasmic" evidence="1">
    <location>
        <begin position="1"/>
        <end position="77"/>
    </location>
</feature>
<feature type="transmembrane region" description="Helical; Name=1" evidence="1">
    <location>
        <begin position="78"/>
        <end position="98"/>
    </location>
</feature>
<feature type="topological domain" description="Extracellular" evidence="1">
    <location>
        <begin position="99"/>
        <end position="122"/>
    </location>
</feature>
<feature type="transmembrane region" description="Helical; Name=2" evidence="1">
    <location>
        <begin position="123"/>
        <end position="146"/>
    </location>
</feature>
<feature type="topological domain" description="Cytoplasmic" evidence="1">
    <location>
        <begin position="147"/>
        <end position="195"/>
    </location>
</feature>
<feature type="transmembrane region" description="Helical; Name=3" evidence="1">
    <location>
        <begin position="196"/>
        <end position="216"/>
    </location>
</feature>
<feature type="topological domain" description="Extracellular" evidence="1">
    <location>
        <begin position="217"/>
        <end position="222"/>
    </location>
</feature>
<feature type="transmembrane region" description="Helical; Name=4" evidence="1">
    <location>
        <begin position="223"/>
        <end position="243"/>
    </location>
</feature>
<feature type="topological domain" description="Cytoplasmic" evidence="1">
    <location>
        <begin position="244"/>
        <end position="298"/>
    </location>
</feature>
<feature type="transmembrane region" description="Helical; Name=5" evidence="1">
    <location>
        <begin position="299"/>
        <end position="319"/>
    </location>
</feature>
<feature type="topological domain" description="Extracellular" evidence="1">
    <location>
        <begin position="320"/>
        <end position="339"/>
    </location>
</feature>
<feature type="transmembrane region" description="Helical; Name=6" evidence="1">
    <location>
        <begin position="340"/>
        <end position="358"/>
    </location>
</feature>
<feature type="topological domain" description="Cytoplasmic" evidence="1">
    <location>
        <begin position="359"/>
        <end position="853"/>
    </location>
</feature>
<feature type="transmembrane region" description="Helical; Name=7" evidence="1">
    <location>
        <begin position="854"/>
        <end position="874"/>
    </location>
</feature>
<feature type="topological domain" description="Extracellular" evidence="1">
    <location>
        <begin position="875"/>
        <end position="913"/>
    </location>
</feature>
<feature type="transmembrane region" description="Discontinuously helical; Name=8" evidence="1">
    <location>
        <begin position="914"/>
        <end position="934"/>
    </location>
</feature>
<feature type="topological domain" description="Cytoplasmic" evidence="1">
    <location>
        <begin position="935"/>
        <end position="985"/>
    </location>
</feature>
<feature type="transmembrane region" description="Helical; Name=9" evidence="1">
    <location>
        <begin position="986"/>
        <end position="1006"/>
    </location>
</feature>
<feature type="topological domain" description="Extracellular" evidence="1">
    <location>
        <begin position="1007"/>
        <end position="1008"/>
    </location>
</feature>
<feature type="transmembrane region" description="Helical; Name=10" evidence="1">
    <location>
        <begin position="1009"/>
        <end position="1029"/>
    </location>
</feature>
<feature type="topological domain" description="Cytoplasmic" evidence="1">
    <location>
        <begin position="1030"/>
        <end position="1090"/>
    </location>
</feature>
<feature type="transmembrane region" description="Helical; Name=11" evidence="1">
    <location>
        <begin position="1091"/>
        <end position="1111"/>
    </location>
</feature>
<feature type="topological domain" description="Extracellular" evidence="1">
    <location>
        <begin position="1112"/>
        <end position="1125"/>
    </location>
</feature>
<feature type="transmembrane region" description="Helical; Name=12" evidence="1">
    <location>
        <begin position="1126"/>
        <end position="1146"/>
    </location>
</feature>
<feature type="topological domain" description="Cytoplasmic" evidence="1">
    <location>
        <begin position="1147"/>
        <end position="1476"/>
    </location>
</feature>
<feature type="domain" description="ABC transmembrane type-1 1" evidence="5">
    <location>
        <begin position="81"/>
        <end position="365"/>
    </location>
</feature>
<feature type="domain" description="ABC transporter 1" evidence="4">
    <location>
        <begin position="423"/>
        <end position="646"/>
    </location>
</feature>
<feature type="domain" description="ABC transmembrane type-1 2" evidence="5">
    <location>
        <begin position="854"/>
        <end position="1153"/>
    </location>
</feature>
<feature type="domain" description="ABC transporter 2" evidence="4">
    <location>
        <begin position="1208"/>
        <end position="1439"/>
    </location>
</feature>
<feature type="region of interest" description="Disordered R region" evidence="1">
    <location>
        <begin position="654"/>
        <end position="826"/>
    </location>
</feature>
<feature type="region of interest" description="Interaction with GORASP2" evidence="1">
    <location>
        <begin position="1382"/>
        <end position="1476"/>
    </location>
</feature>
<feature type="region of interest" description="Disordered" evidence="6">
    <location>
        <begin position="1446"/>
        <end position="1476"/>
    </location>
</feature>
<feature type="short sequence motif" description="PDZ-binding" evidence="1">
    <location>
        <begin position="1474"/>
        <end position="1476"/>
    </location>
</feature>
<feature type="compositionally biased region" description="Acidic residues" evidence="6">
    <location>
        <begin position="1466"/>
        <end position="1476"/>
    </location>
</feature>
<feature type="binding site" evidence="1">
    <location>
        <position position="401"/>
    </location>
    <ligand>
        <name>ATP</name>
        <dbReference type="ChEBI" id="CHEBI:30616"/>
        <label>1</label>
    </ligand>
</feature>
<feature type="binding site" evidence="4 21 22 23 24 25 26 27">
    <location>
        <begin position="458"/>
        <end position="465"/>
    </location>
    <ligand>
        <name>ATP</name>
        <dbReference type="ChEBI" id="CHEBI:30616"/>
        <label>1</label>
    </ligand>
</feature>
<feature type="binding site" evidence="21 22 23 26">
    <location>
        <position position="493"/>
    </location>
    <ligand>
        <name>ATP</name>
        <dbReference type="ChEBI" id="CHEBI:30616"/>
        <label>1</label>
    </ligand>
</feature>
<feature type="binding site" evidence="1">
    <location>
        <position position="1215"/>
    </location>
    <ligand>
        <name>ATP</name>
        <dbReference type="ChEBI" id="CHEBI:30616"/>
        <label>2</label>
    </ligand>
</feature>
<feature type="binding site" evidence="4">
    <location>
        <begin position="1240"/>
        <end position="1247"/>
    </location>
    <ligand>
        <name>ATP</name>
        <dbReference type="ChEBI" id="CHEBI:30616"/>
        <label>2</label>
    </ligand>
</feature>
<feature type="modified residue" description="Phosphoserine" evidence="1">
    <location>
        <position position="549"/>
    </location>
</feature>
<feature type="modified residue" description="Phosphoserine" evidence="1">
    <location>
        <position position="660"/>
    </location>
</feature>
<feature type="modified residue" description="Phosphoserine; by PKA" evidence="1">
    <location>
        <position position="670"/>
    </location>
</feature>
<feature type="modified residue" description="Phosphoserine" evidence="1">
    <location>
        <position position="684"/>
    </location>
</feature>
<feature type="modified residue" description="Phosphoserine" evidence="28">
    <location>
        <position position="698"/>
    </location>
</feature>
<feature type="modified residue" description="Phosphoserine" evidence="1">
    <location>
        <position position="710"/>
    </location>
</feature>
<feature type="modified residue" description="Phosphothreonine" evidence="1">
    <location>
        <position position="715"/>
    </location>
</feature>
<feature type="modified residue" description="Phosphoserine" evidence="1">
    <location>
        <position position="732"/>
    </location>
</feature>
<feature type="modified residue" description="Phosphoserine" evidence="1">
    <location>
        <position position="763"/>
    </location>
</feature>
<feature type="modified residue" description="Phosphoserine" evidence="1">
    <location>
        <position position="785"/>
    </location>
</feature>
<feature type="modified residue" description="Phosphoserine" evidence="28">
    <location>
        <position position="790"/>
    </location>
</feature>
<feature type="modified residue" description="Phosphoserine" evidence="1">
    <location>
        <position position="808"/>
    </location>
</feature>
<feature type="modified residue" description="Phosphoserine" evidence="1">
    <location>
        <position position="1440"/>
    </location>
</feature>
<feature type="modified residue" description="Phosphoserine" evidence="1">
    <location>
        <position position="1452"/>
    </location>
</feature>
<feature type="lipid moiety-binding region" description="S-palmitoyl cysteine" evidence="1">
    <location>
        <position position="524"/>
    </location>
</feature>
<feature type="lipid moiety-binding region" description="S-palmitoyl cysteine" evidence="1">
    <location>
        <position position="1391"/>
    </location>
</feature>
<feature type="glycosylation site" description="N-linked (GlcNAc...) asparagine" evidence="3">
    <location>
        <position position="889"/>
    </location>
</feature>
<feature type="glycosylation site" description="N-linked (GlcNAc...) asparagine" evidence="3">
    <location>
        <position position="895"/>
    </location>
</feature>
<feature type="splice variant" id="VSP_000064" description="In isoform 3." evidence="19">
    <original>AVYKDADLYLLDSPFGYLDVFTEEQVFESCVCKLMANKTR</original>
    <variation>QRTRSPYLEIRIFLCLFLYTRMKVCATTPEQYIKMLICTY</variation>
    <location>
        <begin position="561"/>
        <end position="600"/>
    </location>
</feature>
<feature type="splice variant" id="VSP_000062" description="In isoform 2." evidence="19">
    <original>AVYKDADLYLLDSPFG</original>
    <variation>FLICLQTKDKVSLFRN</variation>
    <location>
        <begin position="561"/>
        <end position="576"/>
    </location>
</feature>
<feature type="splice variant" id="VSP_000063" description="In isoform 2." evidence="19">
    <location>
        <begin position="577"/>
        <end position="1476"/>
    </location>
</feature>
<feature type="splice variant" id="VSP_000065" description="In isoform 3." evidence="19">
    <location>
        <begin position="601"/>
        <end position="1476"/>
    </location>
</feature>
<feature type="mutagenesis site" description="Mildly impairs protein maturation." evidence="8">
    <original>F</original>
    <variation>A</variation>
    <variation>L</variation>
    <variation>Q</variation>
    <location>
        <position position="508"/>
    </location>
</feature>
<feature type="mutagenesis site" description="No effect on protein maturation." evidence="8">
    <original>F</original>
    <variation>C</variation>
    <variation>M</variation>
    <location>
        <position position="508"/>
    </location>
</feature>
<feature type="mutagenesis site" description="Abolishes normal maturation." evidence="8">
    <original>F</original>
    <variation>E</variation>
    <variation>D</variation>
    <variation>G</variation>
    <variation>H</variation>
    <variation>I</variation>
    <variation>K</variation>
    <variation>P</variation>
    <variation>R</variation>
    <variation>Y</variation>
    <location>
        <position position="508"/>
    </location>
</feature>
<feature type="mutagenesis site" description="Nearly abolishes normal maturation." evidence="8">
    <original>F</original>
    <variation>N</variation>
    <variation>S</variation>
    <variation>V</variation>
    <location>
        <position position="508"/>
    </location>
</feature>
<feature type="mutagenesis site" description="Impairs protein folding, due to small local changes that probably disrupt crucial interactions with the transmembrane domain. Abolishes normal maturation. Impairs trafficking to the apical cell membrane." evidence="8 11 13">
    <location>
        <position position="508"/>
    </location>
</feature>
<feature type="sequence conflict" description="In Ref. 3; AAF30300." evidence="19" ref="3">
    <original>TTP</original>
    <variation>STA</variation>
    <location>
        <begin position="20"/>
        <end position="22"/>
    </location>
</feature>
<feature type="sequence conflict" description="In Ref. 3; AAF30300." evidence="19" ref="3">
    <original>H</original>
    <variation>Q</variation>
    <location>
        <position position="30"/>
    </location>
</feature>
<feature type="sequence conflict" description="In Ref. 1; AAA37417." evidence="19" ref="1">
    <original>EKV</original>
    <variation>QKA</variation>
    <location>
        <begin position="410"/>
        <end position="412"/>
    </location>
</feature>
<feature type="sequence conflict" description="In Ref. 1; AAA37417." evidence="19" ref="1">
    <original>S</original>
    <variation>L</variation>
    <location>
        <position position="462"/>
    </location>
</feature>
<feature type="sequence conflict" description="In Ref. 1; AAA37417." evidence="19" ref="1">
    <original>S</original>
    <variation>T</variation>
    <location>
        <position position="623"/>
    </location>
</feature>
<feature type="sequence conflict" description="In Ref. 1; AAA37417." evidence="19" ref="1">
    <original>D</original>
    <variation>S</variation>
    <location>
        <position position="639"/>
    </location>
</feature>
<feature type="strand" evidence="29">
    <location>
        <begin position="392"/>
        <end position="400"/>
    </location>
</feature>
<feature type="helix" evidence="29">
    <location>
        <begin position="405"/>
        <end position="412"/>
    </location>
</feature>
<feature type="helix" evidence="31">
    <location>
        <begin position="423"/>
        <end position="425"/>
    </location>
</feature>
<feature type="helix" evidence="29">
    <location>
        <begin position="430"/>
        <end position="435"/>
    </location>
</feature>
<feature type="strand" evidence="29">
    <location>
        <begin position="439"/>
        <end position="448"/>
    </location>
</feature>
<feature type="strand" evidence="29">
    <location>
        <begin position="453"/>
        <end position="459"/>
    </location>
</feature>
<feature type="helix" evidence="29">
    <location>
        <begin position="464"/>
        <end position="471"/>
    </location>
</feature>
<feature type="strand" evidence="29">
    <location>
        <begin position="478"/>
        <end position="483"/>
    </location>
</feature>
<feature type="strand" evidence="29">
    <location>
        <begin position="488"/>
        <end position="491"/>
    </location>
</feature>
<feature type="strand" evidence="29">
    <location>
        <begin position="499"/>
        <end position="501"/>
    </location>
</feature>
<feature type="helix" evidence="29">
    <location>
        <begin position="502"/>
        <end position="506"/>
    </location>
</feature>
<feature type="turn" evidence="29">
    <location>
        <begin position="507"/>
        <end position="509"/>
    </location>
</feature>
<feature type="helix" evidence="29">
    <location>
        <begin position="514"/>
        <end position="523"/>
    </location>
</feature>
<feature type="helix" evidence="29">
    <location>
        <begin position="527"/>
        <end position="530"/>
    </location>
</feature>
<feature type="helix" evidence="29">
    <location>
        <begin position="536"/>
        <end position="538"/>
    </location>
</feature>
<feature type="helix" evidence="30">
    <location>
        <begin position="543"/>
        <end position="545"/>
    </location>
</feature>
<feature type="helix" evidence="29">
    <location>
        <begin position="550"/>
        <end position="563"/>
    </location>
</feature>
<feature type="strand" evidence="29">
    <location>
        <begin position="567"/>
        <end position="573"/>
    </location>
</feature>
<feature type="helix" evidence="29">
    <location>
        <begin position="580"/>
        <end position="589"/>
    </location>
</feature>
<feature type="helix" evidence="29">
    <location>
        <begin position="590"/>
        <end position="594"/>
    </location>
</feature>
<feature type="turn" evidence="29">
    <location>
        <begin position="595"/>
        <end position="597"/>
    </location>
</feature>
<feature type="strand" evidence="29">
    <location>
        <begin position="598"/>
        <end position="603"/>
    </location>
</feature>
<feature type="helix" evidence="29">
    <location>
        <begin position="607"/>
        <end position="611"/>
    </location>
</feature>
<feature type="strand" evidence="29">
    <location>
        <begin position="614"/>
        <end position="620"/>
    </location>
</feature>
<feature type="strand" evidence="29">
    <location>
        <begin position="623"/>
        <end position="628"/>
    </location>
</feature>
<feature type="helix" evidence="29">
    <location>
        <begin position="630"/>
        <end position="636"/>
    </location>
</feature>
<feature type="helix" evidence="29">
    <location>
        <begin position="638"/>
        <end position="645"/>
    </location>
</feature>
<feature type="strand" evidence="29">
    <location>
        <begin position="647"/>
        <end position="649"/>
    </location>
</feature>
<feature type="helix" evidence="29">
    <location>
        <begin position="650"/>
        <end position="652"/>
    </location>
</feature>
<feature type="helix" evidence="29">
    <location>
        <begin position="655"/>
        <end position="668"/>
    </location>
</feature>
<sequence>MQKSPLEKASFISKLFFSWTTPILRKGYRHHLELSDIYQAPSADSADHLSEKLEREWDREQASKKNPQLIHALRRCFFWRFLFYGILLYLGEVTKAVQPVLLGRIIASYDPENKVERSIAIYLGIGLCLLFIVRTLLLHPAIFGLHRIGMQMRTAMFSLIYKKTLKLSSRVLDKISIGQLVSLLSNNLNKFDEGLALAHFIWIAPLQVTLLMGLLWDLLQFSAFCGLGLLIILVIFQAILGKMMVKYRDQRAAKINERLVITSEIIDNIYSVKAYCWESAMEKMIENLREVELKMTRKAAYMRFFTSSAFFFSGFFVVFLSVLPYTVINGIVLRKIFTTISFCIVLRMSVTRQFPTAVQIWYDSFGMIRKIQDFLQKQEYKVLEYNLMTTGIIMENVTAFWEEGFGELLEKVQQSNGDRKHSSDENNVSFSHLCLVGNPVLKNINLNIEKGEMLAITGSTGSGKTSLLMLILGELEASEGIIKHSGRVSFCSQFSWIMPGTIKENIIFGVSYDEYRYKSVVKACQLQQDITKFAEQDNTVLGEGGVTLSGGQRARISLARAVYKDADLYLLDSPFGYLDVFTEEQVFESCVCKLMANKTRILVTSKMEHLRKADKILILHQGSSYFYGTFSELQSLRPDFSSKLMGYDTFDQFTEERRSSILTETLRRFSVDDSSAPWSKPKQSFRQTGEVGEKRKNSILNSFSSVRKISIVQKTPLCIDGESDDLQEKRLSLVPDSEQGEAALPRSNMIATGPTFPGRRRQSVLDLMTFTPNSGSSNLQRTRTSIRKISLVPQISLNEVDVYSRRLSQDSTLNITEEINEEDLKECFLDDVIKIPPVTTWNTYLRYFTLHKGLLLVLIWCVLVFLVEVAASLFVLWLLKNNPVNSGNNGTKISNSSYVVIITSTSFYYIFYIYVGVADTLLALSLFRGLPLVHTLITASKILHRKMLHSILHAPMSTISKLKAGGILNRFSKDIAILDDFLPLTIFDFIQLVFIVIGAIIVVSALQPYIFLATVPGLVVFILLRAYFLHTAQQLKQLESEGRSPIFTHLVTSLKGLWTLRAFRRQTYFETLFHKALNLHTANWFMYLATLRWFQMRIDMIFVLFFIVVTFISILTTGEGEGTAGIILTLAMNIMSTLQWAVNSSIDTDSLMRSVSRVFKFIDIQTEESMYTQIIKELPREGSSDVLVIKNEHVKKSDIWPSGGEMVVKDLTVKYMDDGNAVLENISFSISPGQRVGLLGRTGSGKSTLLSAFLRMLNIKGDIEIDGVSWNSVTLQEWRKAFGVITQKVFIFSGTFRQNLDPNGKWKDEEIWKVADEVGLKSVIEQFPGQLNFTLVDGGYVLSHGHKQLMCLARSVLSKAKIILLDEPSAHLDPITYQVIRRVLKQAFAGCTVILCEHRIEAMLDCQRFLVIEESNVWQYDSLQALLSEKSIFQQAISSSEKMRFFQGRHSSKHKPRTQITALKEETEEEVQETRL</sequence>
<keyword id="KW-0002">3D-structure</keyword>
<keyword id="KW-0025">Alternative splicing</keyword>
<keyword id="KW-0067">ATP-binding</keyword>
<keyword id="KW-1003">Cell membrane</keyword>
<keyword id="KW-0868">Chloride</keyword>
<keyword id="KW-0869">Chloride channel</keyword>
<keyword id="KW-0256">Endoplasmic reticulum</keyword>
<keyword id="KW-0967">Endosome</keyword>
<keyword id="KW-0325">Glycoprotein</keyword>
<keyword id="KW-0407">Ion channel</keyword>
<keyword id="KW-0406">Ion transport</keyword>
<keyword id="KW-0413">Isomerase</keyword>
<keyword id="KW-0449">Lipoprotein</keyword>
<keyword id="KW-0472">Membrane</keyword>
<keyword id="KW-0547">Nucleotide-binding</keyword>
<keyword id="KW-0539">Nucleus</keyword>
<keyword id="KW-0564">Palmitate</keyword>
<keyword id="KW-0597">Phosphoprotein</keyword>
<keyword id="KW-1185">Reference proteome</keyword>
<keyword id="KW-0677">Repeat</keyword>
<keyword id="KW-0812">Transmembrane</keyword>
<keyword id="KW-1133">Transmembrane helix</keyword>
<keyword id="KW-0813">Transport</keyword>
<keyword id="KW-0832">Ubl conjugation</keyword>
<proteinExistence type="evidence at protein level"/>
<gene>
    <name evidence="20" type="primary">Cftr</name>
    <name type="synonym">Abcc7</name>
</gene>
<reference key="1">
    <citation type="journal article" date="1991" name="Genomics">
        <title>Cloning the mouse homolog of the human cystic fibrosis transmembrane conductance regulator gene.</title>
        <authorList>
            <person name="Tata F."/>
            <person name="Stanier P."/>
            <person name="Wicking C."/>
            <person name="Halford S."/>
            <person name="Kruyer H."/>
            <person name="Lench N.J."/>
            <person name="Scambler P.J."/>
            <person name="Hansen C."/>
            <person name="Braman J.C."/>
            <person name="Williamson R."/>
            <person name="Wainwright B.J."/>
        </authorList>
    </citation>
    <scope>NUCLEOTIDE SEQUENCE [MRNA]</scope>
</reference>
<reference key="2">
    <citation type="journal article" date="1991" name="Genomics">
        <title>Molecular cloning and sequence analysis of the murine cDNA for the cystic fibrosis transmembrane conductance regulator.</title>
        <authorList>
            <person name="Yorifuji T."/>
            <person name="Lemna W.K."/>
            <person name="Ballard C.F."/>
            <person name="Rosenbloom C.L."/>
            <person name="Rozmahel R."/>
            <person name="Plavsic N."/>
            <person name="Tsui L.-C."/>
            <person name="Beaudet A.L."/>
        </authorList>
    </citation>
    <scope>NUCLEOTIDE SEQUENCE [MRNA]</scope>
    <source>
        <strain>BALB/cJ</strain>
    </source>
</reference>
<reference key="3">
    <citation type="journal article" date="2000" name="Proc. Natl. Acad. Sci. U.S.A.">
        <title>Comparative genomic sequence analysis of the human and mouse cystic fibrosis transmembrane conductance regulator genes.</title>
        <authorList>
            <person name="Ellsworth R.E."/>
            <person name="Jamison D.C."/>
            <person name="Touchman J.W."/>
            <person name="Chissoe S.L."/>
            <person name="Braden Maduro V.V."/>
            <person name="Bouffard G.G."/>
            <person name="Dietrich N.L."/>
            <person name="Beckstrom-Sternberg S.M."/>
            <person name="Iyer L.M."/>
            <person name="Weintraub L.A."/>
            <person name="Cotton M."/>
            <person name="Courtney L."/>
            <person name="Edwards J."/>
            <person name="Maupin R."/>
            <person name="Ozersky P."/>
            <person name="Rohlfing T."/>
            <person name="Wohldmann P."/>
            <person name="Miner T."/>
            <person name="Kemp K."/>
            <person name="Kramer J."/>
            <person name="Korf I."/>
            <person name="Pepin K."/>
            <person name="Antonacci-Fulton L."/>
            <person name="Fulton R.S."/>
            <person name="Minx P."/>
            <person name="Hillier L.W."/>
            <person name="Wilson R.K."/>
            <person name="Waterston R.H."/>
            <person name="Miller W."/>
            <person name="Green E.D."/>
        </authorList>
    </citation>
    <scope>NUCLEOTIDE SEQUENCE [GENOMIC DNA]</scope>
</reference>
<reference key="4">
    <citation type="journal article" date="1994" name="Hum. Mol. Genet.">
        <title>Analysis of the mouse and rat CFTR promoter regions.</title>
        <authorList>
            <person name="Denamur E."/>
            <person name="Chehab F.F."/>
        </authorList>
    </citation>
    <scope>NUCLEOTIDE SEQUENCE [GENOMIC DNA] OF 1-17</scope>
</reference>
<reference key="5">
    <citation type="journal article" date="1993" name="Nat. Genet.">
        <title>Cystic fibrosis transmembrane conductance regulator splice variants are not conserved and fail to produce chloride channels.</title>
        <authorList>
            <person name="Delaney S.J."/>
            <person name="Rich D.P."/>
            <person name="Thomson S.A."/>
            <person name="Hargrave M.R."/>
            <person name="Lovelock P.K."/>
            <person name="Welsh M.J."/>
            <person name="Wainwright B.J."/>
        </authorList>
    </citation>
    <scope>NUCLEOTIDE SEQUENCE [GENOMIC DNA] OF 549-600</scope>
    <scope>ALTERNATIVE SPLICING</scope>
    <scope>TISSUE SPECIFICITY</scope>
    <source>
        <tissue>Testis</tissue>
    </source>
</reference>
<reference key="6">
    <citation type="journal article" date="1993" name="Nat. Genet.">
        <title>Production of a severe cystic fibrosis mutation in mice by gene targeting.</title>
        <authorList>
            <person name="Ratcliff R."/>
            <person name="Evans M.J."/>
            <person name="Cuthbert A.W."/>
            <person name="MacVinish L.J."/>
            <person name="Foster D."/>
            <person name="Anderson J.R."/>
            <person name="Colledge W.H."/>
        </authorList>
    </citation>
    <scope>DISRUPTION PHENOTYPE</scope>
</reference>
<reference key="7">
    <citation type="journal article" date="2009" name="J. Clin. Invest.">
        <title>IRBIT coordinates epithelial fluid and HCO3- secretion by stimulating the transporters pNBC1 and CFTR in the murine pancreatic duct.</title>
        <authorList>
            <person name="Yang D."/>
            <person name="Shcheynikov N."/>
            <person name="Zeng W."/>
            <person name="Ohana E."/>
            <person name="So I."/>
            <person name="Ando H."/>
            <person name="Mizutani A."/>
            <person name="Mikoshiba K."/>
            <person name="Muallem S."/>
        </authorList>
    </citation>
    <scope>FUNCTION</scope>
    <scope>INTERACTION WITH AHCYL1</scope>
</reference>
<reference key="8">
    <citation type="journal article" date="2010" name="Cell">
        <title>A tissue-specific atlas of mouse protein phosphorylation and expression.</title>
        <authorList>
            <person name="Huttlin E.L."/>
            <person name="Jedrychowski M.P."/>
            <person name="Elias J.E."/>
            <person name="Goswami T."/>
            <person name="Rad R."/>
            <person name="Beausoleil S.A."/>
            <person name="Villen J."/>
            <person name="Haas W."/>
            <person name="Sowa M.E."/>
            <person name="Gygi S.P."/>
        </authorList>
    </citation>
    <scope>PHOSPHORYLATION [LARGE SCALE ANALYSIS] AT SER-698 AND SER-790</scope>
    <scope>IDENTIFICATION BY MASS SPECTROMETRY [LARGE SCALE ANALYSIS]</scope>
    <source>
        <tissue>Lung</tissue>
    </source>
</reference>
<reference key="9">
    <citation type="journal article" date="2010" name="Proc. Natl. Acad. Sci. U.S.A.">
        <title>Mouse cystic fibrosis transmembrane conductance regulator forms cAMP-PKA-regulated apical chloride channels in cortical collecting duct.</title>
        <authorList>
            <person name="Lu M."/>
            <person name="Dong K."/>
            <person name="Egan M.E."/>
            <person name="Giebisch G.H."/>
            <person name="Boulpaep E.L."/>
            <person name="Hebert S.C."/>
        </authorList>
    </citation>
    <scope>FUNCTION</scope>
    <scope>PHOSPHORYLATION</scope>
    <scope>SUBCELLULAR LOCATION</scope>
</reference>
<reference key="10">
    <citation type="journal article" date="2012" name="Biol. Reprod.">
        <title>Participation of the Cl-/HCO(3)- exchangers SLC26A3 and SLC26A6, the Cl- channel CFTR, and the regulatory factor SLC9A3R1 in mouse sperm capacitation.</title>
        <authorList>
            <person name="Chavez J.C."/>
            <person name="Hernandez-Gonzalez E.O."/>
            <person name="Wertheimer E."/>
            <person name="Visconti P.E."/>
            <person name="Darszon A."/>
            <person name="Trevino C.L."/>
        </authorList>
    </citation>
    <scope>FUNCTION</scope>
    <scope>INTERACTION WITH SLC26A3; SLC26A6 AND NHERF1</scope>
</reference>
<reference key="11">
    <citation type="journal article" date="2013" name="Gastroenterology">
        <title>Irbit mediates synergy between ca(2+) and cAMP signaling pathways during epithelial transport in mice.</title>
        <authorList>
            <person name="Park S."/>
            <person name="Shcheynikov N."/>
            <person name="Hong J.H."/>
            <person name="Zheng C."/>
            <person name="Suh S.H."/>
            <person name="Kawaai K."/>
            <person name="Ando H."/>
            <person name="Mizutani A."/>
            <person name="Abe T."/>
            <person name="Kiyonari H."/>
            <person name="Seki G."/>
            <person name="Yule D."/>
            <person name="Mikoshiba K."/>
            <person name="Muallem S."/>
        </authorList>
    </citation>
    <scope>INTERACTION WITH AHCYL1</scope>
</reference>
<reference key="12">
    <citation type="journal article" date="2016" name="Science">
        <title>Airway acidification initiates host defense abnormalities in cystic fibrosis mice.</title>
        <authorList>
            <person name="Shah V.S."/>
            <person name="Meyerholz D.K."/>
            <person name="Tang X.X."/>
            <person name="Reznikov L."/>
            <person name="Abou Alaiwa M."/>
            <person name="Ernst S.E."/>
            <person name="Karp P.H."/>
            <person name="Wohlford-Lenane C.L."/>
            <person name="Heilmann K.P."/>
            <person name="Leidinger M.R."/>
            <person name="Allen P.D."/>
            <person name="Zabner J."/>
            <person name="McCray P.B. Jr."/>
            <person name="Ostedgaard L.S."/>
            <person name="Stoltz D.A."/>
            <person name="Randak C.O."/>
            <person name="Welsh M.J."/>
        </authorList>
    </citation>
    <scope>FUNCTION</scope>
</reference>
<reference key="13">
    <citation type="journal article" date="2011" name="Cell">
        <title>Rescue of DeltaF508-CFTR trafficking via a GRASP-dependent unconventional secretion pathway.</title>
        <authorList>
            <person name="Gee H.Y."/>
            <person name="Noh S.H."/>
            <person name="Tang B.L."/>
            <person name="Kim K.H."/>
            <person name="Lee M.G."/>
        </authorList>
    </citation>
    <scope>SUBCELLULAR LOCATION</scope>
    <scope>MUTAGENESIS OF PHE-508</scope>
</reference>
<reference key="14">
    <citation type="journal article" date="2019" name="J. Mol. Histol.">
        <title>Mapping the sites of localization of epithelial sodium channel (ENaC) and CFTR in segments of the mammalian epididymis.</title>
        <authorList>
            <person name="Sharma S."/>
            <person name="Hanukoglu I."/>
        </authorList>
    </citation>
    <scope>TISSUE SPECIFICITY</scope>
</reference>
<reference key="15">
    <citation type="journal article" date="2004" name="EMBO J.">
        <title>Structure of nucleotide-binding domain 1 of the cystic fibrosis transmembrane conductance regulator.</title>
        <authorList>
            <person name="Lewis H.A."/>
            <person name="Buchanan S.G."/>
            <person name="Burley S.K."/>
            <person name="Conners K."/>
            <person name="Dickey M."/>
            <person name="Dorwart M."/>
            <person name="Fowler R."/>
            <person name="Gao X."/>
            <person name="Guggino W.B."/>
            <person name="Hendrickson W.A."/>
            <person name="Hunt J.F."/>
            <person name="Kearins M.C."/>
            <person name="Lorimer D."/>
            <person name="Maloney P.C."/>
            <person name="Post K.W."/>
            <person name="Rajashankar K.R."/>
            <person name="Rutter M.E."/>
            <person name="Sauder J.M."/>
            <person name="Shriver S."/>
            <person name="Thibodeau P.H."/>
            <person name="Thomas P.J."/>
            <person name="Zhang M."/>
            <person name="Zhao X."/>
            <person name="Emtage S."/>
        </authorList>
    </citation>
    <scope>X-RAY CRYSTALLOGRAPHY (2.20 ANGSTROMS) OF 389-673 IN COMPLEXES WITH ATP AND ATP ANALOGS</scope>
    <scope>DOMAIN</scope>
</reference>
<reference evidence="25 26" key="16">
    <citation type="journal article" date="2005" name="Nat. Struct. Mol. Biol.">
        <title>Side chain and backbone contributions of Phe508 to CFTR folding.</title>
        <authorList>
            <person name="Thibodeau P.H."/>
            <person name="Brautigam C.A."/>
            <person name="Machius M."/>
            <person name="Thomas P.J."/>
        </authorList>
    </citation>
    <scope>X-RAY CRYSTALLOGRAPHY (2.70 ANGSTROMS) OF 389-670 IN COMPLEX WITH ATP</scope>
    <scope>DOMAIN</scope>
    <scope>MUTAGENESIS OF PHE-508</scope>
</reference>
<reference evidence="27" key="17">
    <citation type="journal article" date="2012" name="Cell">
        <title>Requirements for efficient correction of F508 CFTR revealed by analyses of evolved sequences.</title>
        <authorList>
            <person name="Mendoza J.L."/>
            <person name="Schmidt A."/>
            <person name="Li Q."/>
            <person name="Nuvaga E."/>
            <person name="Barrett T."/>
            <person name="Bridges R.J."/>
            <person name="Feranchak A.P."/>
            <person name="Brautigam C.A."/>
            <person name="Thomas P.J."/>
        </authorList>
    </citation>
    <scope>X-RAY CRYSTALLOGRAPHY (2.25 ANGSTROMS) OF 389-673 IN COMPLEX WITH ATP AND MAGNESIUM</scope>
    <scope>FUNCTION</scope>
    <scope>SUBCELLULAR LOCATION</scope>
    <scope>MUTAGENESIS OF PHE-508</scope>
</reference>